<accession>Q8VZ80</accession>
<accession>Q9LS92</accession>
<dbReference type="EMBL" id="AB026654">
    <property type="protein sequence ID" value="BAB01812.1"/>
    <property type="molecule type" value="Genomic_DNA"/>
</dbReference>
<dbReference type="EMBL" id="CP002686">
    <property type="protein sequence ID" value="AEE76153.1"/>
    <property type="molecule type" value="Genomic_DNA"/>
</dbReference>
<dbReference type="EMBL" id="AY065183">
    <property type="protein sequence ID" value="AAL38359.1"/>
    <property type="status" value="ALT_FRAME"/>
    <property type="molecule type" value="mRNA"/>
</dbReference>
<dbReference type="EMBL" id="AY081618">
    <property type="protein sequence ID" value="AAM10180.1"/>
    <property type="molecule type" value="mRNA"/>
</dbReference>
<dbReference type="SMR" id="Q8VZ80"/>
<dbReference type="BioGRID" id="6749">
    <property type="interactions" value="2"/>
</dbReference>
<dbReference type="FunCoup" id="Q8VZ80">
    <property type="interactions" value="41"/>
</dbReference>
<dbReference type="STRING" id="3702.Q8VZ80"/>
<dbReference type="TCDB" id="2.A.1.1.34">
    <property type="family name" value="the major facilitator superfamily (mfs)"/>
</dbReference>
<dbReference type="GlyGen" id="Q8VZ80">
    <property type="glycosylation" value="1 site"/>
</dbReference>
<dbReference type="iPTMnet" id="Q8VZ80"/>
<dbReference type="PaxDb" id="3702-AT3G18830.1"/>
<dbReference type="ProteomicsDB" id="234924"/>
<dbReference type="EnsemblPlants" id="AT3G18830.1">
    <property type="protein sequence ID" value="AT3G18830.1"/>
    <property type="gene ID" value="AT3G18830"/>
</dbReference>
<dbReference type="Gramene" id="AT3G18830.1">
    <property type="protein sequence ID" value="AT3G18830.1"/>
    <property type="gene ID" value="AT3G18830"/>
</dbReference>
<dbReference type="KEGG" id="ath:AT3G18830"/>
<dbReference type="Araport" id="AT3G18830"/>
<dbReference type="TAIR" id="AT3G18830">
    <property type="gene designation" value="PMT5"/>
</dbReference>
<dbReference type="eggNOG" id="KOG0254">
    <property type="taxonomic scope" value="Eukaryota"/>
</dbReference>
<dbReference type="HOGENOM" id="CLU_001265_30_5_1"/>
<dbReference type="InParanoid" id="Q8VZ80"/>
<dbReference type="OMA" id="VSECCPK"/>
<dbReference type="OrthoDB" id="6339427at2759"/>
<dbReference type="PhylomeDB" id="Q8VZ80"/>
<dbReference type="PRO" id="PR:Q8VZ80"/>
<dbReference type="Proteomes" id="UP000006548">
    <property type="component" value="Chromosome 3"/>
</dbReference>
<dbReference type="ExpressionAtlas" id="Q8VZ80">
    <property type="expression patterns" value="baseline and differential"/>
</dbReference>
<dbReference type="GO" id="GO:0005886">
    <property type="term" value="C:plasma membrane"/>
    <property type="evidence" value="ECO:0000314"/>
    <property type="project" value="TAIR"/>
</dbReference>
<dbReference type="GO" id="GO:0005351">
    <property type="term" value="F:carbohydrate:proton symporter activity"/>
    <property type="evidence" value="ECO:0000314"/>
    <property type="project" value="TAIR"/>
</dbReference>
<dbReference type="GO" id="GO:0015591">
    <property type="term" value="F:D-ribose transmembrane transporter activity"/>
    <property type="evidence" value="ECO:0000314"/>
    <property type="project" value="TAIR"/>
</dbReference>
<dbReference type="GO" id="GO:0015148">
    <property type="term" value="F:D-xylose transmembrane transporter activity"/>
    <property type="evidence" value="ECO:0000314"/>
    <property type="project" value="TAIR"/>
</dbReference>
<dbReference type="GO" id="GO:0005354">
    <property type="term" value="F:galactose transmembrane transporter activity"/>
    <property type="evidence" value="ECO:0000314"/>
    <property type="project" value="TAIR"/>
</dbReference>
<dbReference type="GO" id="GO:0015168">
    <property type="term" value="F:glycerol transmembrane transporter activity"/>
    <property type="evidence" value="ECO:0000314"/>
    <property type="project" value="TAIR"/>
</dbReference>
<dbReference type="GO" id="GO:0015575">
    <property type="term" value="F:mannitol transmembrane transporter activity"/>
    <property type="evidence" value="ECO:0000314"/>
    <property type="project" value="TAIR"/>
</dbReference>
<dbReference type="GO" id="GO:0015145">
    <property type="term" value="F:monosaccharide transmembrane transporter activity"/>
    <property type="evidence" value="ECO:0000314"/>
    <property type="project" value="TAIR"/>
</dbReference>
<dbReference type="GO" id="GO:0005365">
    <property type="term" value="F:myo-inositol transmembrane transporter activity"/>
    <property type="evidence" value="ECO:0000314"/>
    <property type="project" value="TAIR"/>
</dbReference>
<dbReference type="GO" id="GO:0015576">
    <property type="term" value="F:sorbitol transmembrane transporter activity"/>
    <property type="evidence" value="ECO:0000314"/>
    <property type="project" value="TAIR"/>
</dbReference>
<dbReference type="GO" id="GO:0010311">
    <property type="term" value="P:lateral root formation"/>
    <property type="evidence" value="ECO:0000315"/>
    <property type="project" value="CACAO"/>
</dbReference>
<dbReference type="CDD" id="cd17437">
    <property type="entry name" value="MFS_PLT"/>
    <property type="match status" value="1"/>
</dbReference>
<dbReference type="FunFam" id="1.20.1250.20:FF:000025">
    <property type="entry name" value="probable polyol transporter 4"/>
    <property type="match status" value="1"/>
</dbReference>
<dbReference type="Gene3D" id="1.20.1250.20">
    <property type="entry name" value="MFS general substrate transporter like domains"/>
    <property type="match status" value="1"/>
</dbReference>
<dbReference type="InterPro" id="IPR020846">
    <property type="entry name" value="MFS_dom"/>
</dbReference>
<dbReference type="InterPro" id="IPR005828">
    <property type="entry name" value="MFS_sugar_transport-like"/>
</dbReference>
<dbReference type="InterPro" id="IPR036259">
    <property type="entry name" value="MFS_trans_sf"/>
</dbReference>
<dbReference type="InterPro" id="IPR044776">
    <property type="entry name" value="PLT1-6"/>
</dbReference>
<dbReference type="InterPro" id="IPR045262">
    <property type="entry name" value="STP/PLT_plant"/>
</dbReference>
<dbReference type="InterPro" id="IPR003663">
    <property type="entry name" value="Sugar/inositol_transpt"/>
</dbReference>
<dbReference type="InterPro" id="IPR005829">
    <property type="entry name" value="Sugar_transporter_CS"/>
</dbReference>
<dbReference type="NCBIfam" id="TIGR00879">
    <property type="entry name" value="SP"/>
    <property type="match status" value="1"/>
</dbReference>
<dbReference type="PANTHER" id="PTHR23500:SF424">
    <property type="entry name" value="POLYOL TRANSPORTER 5"/>
    <property type="match status" value="1"/>
</dbReference>
<dbReference type="PANTHER" id="PTHR23500">
    <property type="entry name" value="SOLUTE CARRIER FAMILY 2, FACILITATED GLUCOSE TRANSPORTER"/>
    <property type="match status" value="1"/>
</dbReference>
<dbReference type="Pfam" id="PF00083">
    <property type="entry name" value="Sugar_tr"/>
    <property type="match status" value="1"/>
</dbReference>
<dbReference type="PRINTS" id="PR00171">
    <property type="entry name" value="SUGRTRNSPORT"/>
</dbReference>
<dbReference type="SUPFAM" id="SSF103473">
    <property type="entry name" value="MFS general substrate transporter"/>
    <property type="match status" value="1"/>
</dbReference>
<dbReference type="PROSITE" id="PS50850">
    <property type="entry name" value="MFS"/>
    <property type="match status" value="1"/>
</dbReference>
<dbReference type="PROSITE" id="PS00216">
    <property type="entry name" value="SUGAR_TRANSPORT_1"/>
    <property type="match status" value="1"/>
</dbReference>
<dbReference type="PROSITE" id="PS00217">
    <property type="entry name" value="SUGAR_TRANSPORT_2"/>
    <property type="match status" value="1"/>
</dbReference>
<reference key="1">
    <citation type="journal article" date="2000" name="DNA Res.">
        <title>Structural analysis of Arabidopsis thaliana chromosome 3. I. Sequence features of the regions of 4,504,864 bp covered by sixty P1 and TAC clones.</title>
        <authorList>
            <person name="Sato S."/>
            <person name="Nakamura Y."/>
            <person name="Kaneko T."/>
            <person name="Katoh T."/>
            <person name="Asamizu E."/>
            <person name="Tabata S."/>
        </authorList>
    </citation>
    <scope>NUCLEOTIDE SEQUENCE [LARGE SCALE GENOMIC DNA]</scope>
    <source>
        <strain>cv. Columbia</strain>
    </source>
</reference>
<reference key="2">
    <citation type="journal article" date="2017" name="Plant J.">
        <title>Araport11: a complete reannotation of the Arabidopsis thaliana reference genome.</title>
        <authorList>
            <person name="Cheng C.Y."/>
            <person name="Krishnakumar V."/>
            <person name="Chan A.P."/>
            <person name="Thibaud-Nissen F."/>
            <person name="Schobel S."/>
            <person name="Town C.D."/>
        </authorList>
    </citation>
    <scope>GENOME REANNOTATION</scope>
    <source>
        <strain>cv. Columbia</strain>
    </source>
</reference>
<reference key="3">
    <citation type="journal article" date="2003" name="Science">
        <title>Empirical analysis of transcriptional activity in the Arabidopsis genome.</title>
        <authorList>
            <person name="Yamada K."/>
            <person name="Lim J."/>
            <person name="Dale J.M."/>
            <person name="Chen H."/>
            <person name="Shinn P."/>
            <person name="Palm C.J."/>
            <person name="Southwick A.M."/>
            <person name="Wu H.C."/>
            <person name="Kim C.J."/>
            <person name="Nguyen M."/>
            <person name="Pham P.K."/>
            <person name="Cheuk R.F."/>
            <person name="Karlin-Newmann G."/>
            <person name="Liu S.X."/>
            <person name="Lam B."/>
            <person name="Sakano H."/>
            <person name="Wu T."/>
            <person name="Yu G."/>
            <person name="Miranda M."/>
            <person name="Quach H.L."/>
            <person name="Tripp M."/>
            <person name="Chang C.H."/>
            <person name="Lee J.M."/>
            <person name="Toriumi M.J."/>
            <person name="Chan M.M."/>
            <person name="Tang C.C."/>
            <person name="Onodera C.S."/>
            <person name="Deng J.M."/>
            <person name="Akiyama K."/>
            <person name="Ansari Y."/>
            <person name="Arakawa T."/>
            <person name="Banh J."/>
            <person name="Banno F."/>
            <person name="Bowser L."/>
            <person name="Brooks S.Y."/>
            <person name="Carninci P."/>
            <person name="Chao Q."/>
            <person name="Choy N."/>
            <person name="Enju A."/>
            <person name="Goldsmith A.D."/>
            <person name="Gurjal M."/>
            <person name="Hansen N.F."/>
            <person name="Hayashizaki Y."/>
            <person name="Johnson-Hopson C."/>
            <person name="Hsuan V.W."/>
            <person name="Iida K."/>
            <person name="Karnes M."/>
            <person name="Khan S."/>
            <person name="Koesema E."/>
            <person name="Ishida J."/>
            <person name="Jiang P.X."/>
            <person name="Jones T."/>
            <person name="Kawai J."/>
            <person name="Kamiya A."/>
            <person name="Meyers C."/>
            <person name="Nakajima M."/>
            <person name="Narusaka M."/>
            <person name="Seki M."/>
            <person name="Sakurai T."/>
            <person name="Satou M."/>
            <person name="Tamse R."/>
            <person name="Vaysberg M."/>
            <person name="Wallender E.K."/>
            <person name="Wong C."/>
            <person name="Yamamura Y."/>
            <person name="Yuan S."/>
            <person name="Shinozaki K."/>
            <person name="Davis R.W."/>
            <person name="Theologis A."/>
            <person name="Ecker J.R."/>
        </authorList>
    </citation>
    <scope>NUCLEOTIDE SEQUENCE [LARGE SCALE MRNA] OF 249-527</scope>
    <source>
        <strain>cv. Columbia</strain>
    </source>
</reference>
<reference key="4">
    <citation type="journal article" date="2005" name="J. Biol. Chem.">
        <title>Analysis of transport activity of Arabidopsis sugar alcohol permease homolog AtPLT5.</title>
        <authorList>
            <person name="Reinders A."/>
            <person name="Panshyshyn J.A."/>
            <person name="Ward J.M."/>
        </authorList>
    </citation>
    <scope>FUNCTION</scope>
    <scope>BIOPHYSICOCHEMICAL PROPERTIES</scope>
    <scope>SUBCELLULAR LOCATION</scope>
    <scope>TISSUE SPECIFICITY</scope>
    <scope>INDUCTION</scope>
</reference>
<reference key="5">
    <citation type="journal article" date="2005" name="Plant Cell">
        <title>Arabidopsis POLYOL TRANSPORTER5, a new member of the monosaccharide transporter-like superfamily, mediates H+-symport of numerous substrates, including myo-inositol, glycerol, and ribose.</title>
        <authorList>
            <person name="Klepek Y.-S."/>
            <person name="Geiger D."/>
            <person name="Stadler R."/>
            <person name="Klebl F."/>
            <person name="Landouar-Arsivaud L."/>
            <person name="Lemoine R."/>
            <person name="Hedrich R."/>
            <person name="Sauer N."/>
        </authorList>
    </citation>
    <scope>FUNCTION</scope>
    <scope>BIOPHYSICOCHEMICAL PROPERTIES</scope>
    <scope>SUBCELLULAR LOCATION</scope>
    <scope>TISSUE SPECIFICITY</scope>
</reference>
<reference key="6">
    <citation type="journal article" date="2006" name="BMC Evol. Biol.">
        <title>The monosaccharide transporter gene family in land plants is ancient and shows differential subfamily expression and expansion across lineages.</title>
        <authorList>
            <person name="Johnson D.A."/>
            <person name="Hill J.P."/>
            <person name="Thomas M.A."/>
        </authorList>
    </citation>
    <scope>GENE FAMILY</scope>
</reference>
<keyword id="KW-1003">Cell membrane</keyword>
<keyword id="KW-0472">Membrane</keyword>
<keyword id="KW-1185">Reference proteome</keyword>
<keyword id="KW-0762">Sugar transport</keyword>
<keyword id="KW-0769">Symport</keyword>
<keyword id="KW-0812">Transmembrane</keyword>
<keyword id="KW-1133">Transmembrane helix</keyword>
<keyword id="KW-0813">Transport</keyword>
<gene>
    <name type="primary">PLT5</name>
    <name type="ordered locus">At3g18830</name>
    <name type="ORF">MVE11.10</name>
    <name type="ORF">MVE11.22</name>
</gene>
<organism>
    <name type="scientific">Arabidopsis thaliana</name>
    <name type="common">Mouse-ear cress</name>
    <dbReference type="NCBI Taxonomy" id="3702"/>
    <lineage>
        <taxon>Eukaryota</taxon>
        <taxon>Viridiplantae</taxon>
        <taxon>Streptophyta</taxon>
        <taxon>Embryophyta</taxon>
        <taxon>Tracheophyta</taxon>
        <taxon>Spermatophyta</taxon>
        <taxon>Magnoliopsida</taxon>
        <taxon>eudicotyledons</taxon>
        <taxon>Gunneridae</taxon>
        <taxon>Pentapetalae</taxon>
        <taxon>rosids</taxon>
        <taxon>malvids</taxon>
        <taxon>Brassicales</taxon>
        <taxon>Brassicaceae</taxon>
        <taxon>Camelineae</taxon>
        <taxon>Arabidopsis</taxon>
    </lineage>
</organism>
<comment type="function">
    <text evidence="3 4">Plasma membrane broad-spectrum sugar-proton symporter. Mediates the uptake of linear polyols such as sorbitol, xylitol, erythritol or glycerol. Can transport the cyclic polyol myo-inositol and different hexoses, pentoses (including ribose), tetroses and sugar alcohols.</text>
</comment>
<comment type="biophysicochemical properties">
    <kinetics>
        <KM evidence="3 4">0.5 mM for sorbitol</KM>
        <KM evidence="3 4">1.5 mM for glucose</KM>
        <KM evidence="3 4">3.5 mM for myo-inositol</KM>
        <KM evidence="3 4">23.4 mM for glycerol</KM>
        <text>Determined at -60 mV (membrane potential) and an extracellular pH of 5.5.</text>
    </kinetics>
    <phDependence>
        <text evidence="3 4">Optimum extracellular pH is 4.5 for sorbitol as substrate.</text>
    </phDependence>
</comment>
<comment type="subcellular location">
    <subcellularLocation>
        <location evidence="3 4">Cell membrane</location>
        <topology evidence="3 4">Multi-pass membrane protein</topology>
    </subcellularLocation>
</comment>
<comment type="tissue specificity">
    <text evidence="3 4">Highly expressed in roots. Expressed in vascular tissue of leaves, sepals and siliques.</text>
</comment>
<comment type="induction">
    <text evidence="3">By wounding and insect feeding.</text>
</comment>
<comment type="similarity">
    <text evidence="5">Belongs to the major facilitator superfamily. Sugar transporter (TC 2.A.1.1) family.</text>
</comment>
<comment type="sequence caution" evidence="5">
    <conflict type="frameshift">
        <sequence resource="EMBL-CDS" id="AAL38359"/>
    </conflict>
</comment>
<proteinExistence type="evidence at protein level"/>
<sequence>MTGATPENRTAPSPPPVKHVPESVLPAKPPKRNNYAFACAILASMTSILLGYDIGVMSGAMIYIKRDLKINDLQIGILAGSLNIYSLIGSCAAGRTSDWIGRRYTIVLAGAIFFAGAILMGLSPNYAFLMFGRFIAGIGVGYALMIAPVYTAEVSPASSRGFLNSFPEVFINAGIMLGYVSNLAFSNLPLKVGWRLMLGIGAVPSVILAIGVLAMPESPRWLVMQGRLGDAKRVLDKTSDSPTEATLRLEDIKHAAGIPADCHDDVVQVSRRNSHGEGVWRELLIRPTPAVRRVMIAAIGIHFFQQASGIDAVVLFSPRIFKTAGLKTDHQQLLATVAVGVVKTSFILVATFLLDRIGRRPLLLTSVGGMVLSLAALGTSLTIIDQSEKKVMWAVVVAIATVMTYVATFSIGAGPITWVYSSEIFPLRLRSQGSSMGVVVNRVTSGVISISFLPMSKAMTTGGAFYLFGGIATVAWVFFYTFLPETQGRMLEDMDELFSGFRWRDSKSKPKGNPEKTVPNPEVEIGSNKQWKEGDTQSS</sequence>
<evidence type="ECO:0000255" key="1"/>
<evidence type="ECO:0000256" key="2">
    <source>
        <dbReference type="SAM" id="MobiDB-lite"/>
    </source>
</evidence>
<evidence type="ECO:0000269" key="3">
    <source>
    </source>
</evidence>
<evidence type="ECO:0000269" key="4">
    <source>
    </source>
</evidence>
<evidence type="ECO:0000305" key="5"/>
<feature type="chain" id="PRO_0000259873" description="Polyol transporter 5">
    <location>
        <begin position="1"/>
        <end position="539"/>
    </location>
</feature>
<feature type="transmembrane region" description="Helical; Name=1" evidence="1">
    <location>
        <begin position="37"/>
        <end position="57"/>
    </location>
</feature>
<feature type="transmembrane region" description="Helical; Name=2" evidence="1">
    <location>
        <begin position="73"/>
        <end position="93"/>
    </location>
</feature>
<feature type="transmembrane region" description="Helical; Name=3" evidence="1">
    <location>
        <begin position="104"/>
        <end position="124"/>
    </location>
</feature>
<feature type="transmembrane region" description="Helical; Name=4" evidence="1">
    <location>
        <begin position="127"/>
        <end position="147"/>
    </location>
</feature>
<feature type="transmembrane region" description="Helical; Name=5" evidence="1">
    <location>
        <begin position="165"/>
        <end position="185"/>
    </location>
</feature>
<feature type="transmembrane region" description="Helical; Name=6" evidence="1">
    <location>
        <begin position="196"/>
        <end position="216"/>
    </location>
</feature>
<feature type="transmembrane region" description="Helical; Name=7" evidence="1">
    <location>
        <begin position="296"/>
        <end position="316"/>
    </location>
</feature>
<feature type="transmembrane region" description="Helical; Name=8" evidence="1">
    <location>
        <begin position="333"/>
        <end position="353"/>
    </location>
</feature>
<feature type="transmembrane region" description="Helical; Name=9" evidence="1">
    <location>
        <begin position="364"/>
        <end position="384"/>
    </location>
</feature>
<feature type="transmembrane region" description="Helical; Name=10" evidence="1">
    <location>
        <begin position="391"/>
        <end position="411"/>
    </location>
</feature>
<feature type="transmembrane region" description="Helical; Name=11" evidence="1">
    <location>
        <begin position="433"/>
        <end position="453"/>
    </location>
</feature>
<feature type="transmembrane region" description="Helical; Name=12" evidence="1">
    <location>
        <begin position="463"/>
        <end position="483"/>
    </location>
</feature>
<feature type="region of interest" description="Disordered" evidence="2">
    <location>
        <begin position="1"/>
        <end position="24"/>
    </location>
</feature>
<feature type="region of interest" description="Disordered" evidence="2">
    <location>
        <begin position="503"/>
        <end position="539"/>
    </location>
</feature>
<feature type="compositionally biased region" description="Polar residues" evidence="2">
    <location>
        <begin position="1"/>
        <end position="11"/>
    </location>
</feature>
<feature type="compositionally biased region" description="Basic and acidic residues" evidence="2">
    <location>
        <begin position="503"/>
        <end position="514"/>
    </location>
</feature>
<feature type="compositionally biased region" description="Basic and acidic residues" evidence="2">
    <location>
        <begin position="530"/>
        <end position="539"/>
    </location>
</feature>
<feature type="sequence conflict" description="In Ref. 3; AAL38359/AAM10180." evidence="5" ref="3">
    <original>S</original>
    <variation>L</variation>
    <location>
        <position position="527"/>
    </location>
</feature>
<protein>
    <recommendedName>
        <fullName>Polyol transporter 5</fullName>
    </recommendedName>
    <alternativeName>
        <fullName>Protein POLYOL TRANSPORTER 5</fullName>
        <shortName>AtPLT5</shortName>
    </alternativeName>
    <alternativeName>
        <fullName>Sugar-proton symporter PLT5</fullName>
    </alternativeName>
</protein>
<name>PLT5_ARATH</name>